<proteinExistence type="inferred from homology"/>
<dbReference type="EMBL" id="L42023">
    <property type="protein sequence ID" value="AAC22051.1"/>
    <property type="molecule type" value="Genomic_DNA"/>
</dbReference>
<dbReference type="PIR" id="B64007">
    <property type="entry name" value="B64007"/>
</dbReference>
<dbReference type="STRING" id="71421.HI_0392"/>
<dbReference type="EnsemblBacteria" id="AAC22051">
    <property type="protein sequence ID" value="AAC22051"/>
    <property type="gene ID" value="HI_0392"/>
</dbReference>
<dbReference type="KEGG" id="hin:HI_0392"/>
<dbReference type="eggNOG" id="COG1835">
    <property type="taxonomic scope" value="Bacteria"/>
</dbReference>
<dbReference type="HOGENOM" id="CLU_005679_1_1_6"/>
<dbReference type="PhylomeDB" id="P43993"/>
<dbReference type="Proteomes" id="UP000000579">
    <property type="component" value="Chromosome"/>
</dbReference>
<dbReference type="GO" id="GO:0005886">
    <property type="term" value="C:plasma membrane"/>
    <property type="evidence" value="ECO:0007669"/>
    <property type="project" value="UniProtKB-SubCell"/>
</dbReference>
<dbReference type="GO" id="GO:0016747">
    <property type="term" value="F:acyltransferase activity, transferring groups other than amino-acyl groups"/>
    <property type="evidence" value="ECO:0007669"/>
    <property type="project" value="InterPro"/>
</dbReference>
<dbReference type="InterPro" id="IPR002656">
    <property type="entry name" value="Acyl_transf_3_dom"/>
</dbReference>
<dbReference type="InterPro" id="IPR050879">
    <property type="entry name" value="Acyltransferase_3"/>
</dbReference>
<dbReference type="PANTHER" id="PTHR23028">
    <property type="entry name" value="ACETYLTRANSFERASE"/>
    <property type="match status" value="1"/>
</dbReference>
<dbReference type="PANTHER" id="PTHR23028:SF53">
    <property type="entry name" value="ACYL_TRANSF_3 DOMAIN-CONTAINING PROTEIN"/>
    <property type="match status" value="1"/>
</dbReference>
<dbReference type="Pfam" id="PF01757">
    <property type="entry name" value="Acyl_transf_3"/>
    <property type="match status" value="1"/>
</dbReference>
<comment type="subcellular location">
    <subcellularLocation>
        <location evidence="2">Cell membrane</location>
        <topology evidence="2">Multi-pass membrane protein</topology>
    </subcellularLocation>
</comment>
<comment type="similarity">
    <text evidence="2">Belongs to the acyltransferase 3 family.</text>
</comment>
<organism>
    <name type="scientific">Haemophilus influenzae (strain ATCC 51907 / DSM 11121 / KW20 / Rd)</name>
    <dbReference type="NCBI Taxonomy" id="71421"/>
    <lineage>
        <taxon>Bacteria</taxon>
        <taxon>Pseudomonadati</taxon>
        <taxon>Pseudomonadota</taxon>
        <taxon>Gammaproteobacteria</taxon>
        <taxon>Pasteurellales</taxon>
        <taxon>Pasteurellaceae</taxon>
        <taxon>Haemophilus</taxon>
    </lineage>
</organism>
<accession>P43993</accession>
<gene>
    <name type="ordered locus">HI_0392</name>
</gene>
<sequence length="245" mass="28178">MDIFFVISGFLITGIIITEIQQNSFSLKQFYTRRIKRIYPAFITVMALVSFIASAIFIYNDFNKLRKTIELAIAFLSNFYLGLTQGYFDLSANENPVLHIWSLAVEGQYYLIFPLILILAYKKFREVKVLFIITLILFFILLATSFVSANFYKEVLHQPNIYYLSNLRFPELLVGSLLAIYHNLSNKVQLSKQVNNILAILSTLLLFSCLFLMNNNIAFIPGITLILPCIFTALIIHTTSQNNIR</sequence>
<reference key="1">
    <citation type="journal article" date="1995" name="Science">
        <title>Whole-genome random sequencing and assembly of Haemophilus influenzae Rd.</title>
        <authorList>
            <person name="Fleischmann R.D."/>
            <person name="Adams M.D."/>
            <person name="White O."/>
            <person name="Clayton R.A."/>
            <person name="Kirkness E.F."/>
            <person name="Kerlavage A.R."/>
            <person name="Bult C.J."/>
            <person name="Tomb J.-F."/>
            <person name="Dougherty B.A."/>
            <person name="Merrick J.M."/>
            <person name="McKenney K."/>
            <person name="Sutton G.G."/>
            <person name="FitzHugh W."/>
            <person name="Fields C.A."/>
            <person name="Gocayne J.D."/>
            <person name="Scott J.D."/>
            <person name="Shirley R."/>
            <person name="Liu L.-I."/>
            <person name="Glodek A."/>
            <person name="Kelley J.M."/>
            <person name="Weidman J.F."/>
            <person name="Phillips C.A."/>
            <person name="Spriggs T."/>
            <person name="Hedblom E."/>
            <person name="Cotton M.D."/>
            <person name="Utterback T.R."/>
            <person name="Hanna M.C."/>
            <person name="Nguyen D.T."/>
            <person name="Saudek D.M."/>
            <person name="Brandon R.C."/>
            <person name="Fine L.D."/>
            <person name="Fritchman J.L."/>
            <person name="Fuhrmann J.L."/>
            <person name="Geoghagen N.S.M."/>
            <person name="Gnehm C.L."/>
            <person name="McDonald L.A."/>
            <person name="Small K.V."/>
            <person name="Fraser C.M."/>
            <person name="Smith H.O."/>
            <person name="Venter J.C."/>
        </authorList>
    </citation>
    <scope>NUCLEOTIDE SEQUENCE [LARGE SCALE GENOMIC DNA]</scope>
    <source>
        <strain>ATCC 51907 / DSM 11121 / KW20 / Rd</strain>
    </source>
</reference>
<protein>
    <recommendedName>
        <fullName>Uncharacterized protein HI_0392</fullName>
    </recommendedName>
</protein>
<feature type="chain" id="PRO_0000208099" description="Uncharacterized protein HI_0392">
    <location>
        <begin position="1"/>
        <end position="245"/>
    </location>
</feature>
<feature type="transmembrane region" description="Helical" evidence="1">
    <location>
        <begin position="38"/>
        <end position="58"/>
    </location>
</feature>
<feature type="transmembrane region" description="Helical" evidence="1">
    <location>
        <begin position="68"/>
        <end position="88"/>
    </location>
</feature>
<feature type="transmembrane region" description="Helical" evidence="1">
    <location>
        <begin position="100"/>
        <end position="120"/>
    </location>
</feature>
<feature type="transmembrane region" description="Helical" evidence="1">
    <location>
        <begin position="129"/>
        <end position="149"/>
    </location>
</feature>
<feature type="transmembrane region" description="Helical" evidence="1">
    <location>
        <begin position="194"/>
        <end position="214"/>
    </location>
</feature>
<feature type="transmembrane region" description="Helical" evidence="1">
    <location>
        <begin position="217"/>
        <end position="237"/>
    </location>
</feature>
<evidence type="ECO:0000255" key="1"/>
<evidence type="ECO:0000305" key="2"/>
<keyword id="KW-1003">Cell membrane</keyword>
<keyword id="KW-0472">Membrane</keyword>
<keyword id="KW-1185">Reference proteome</keyword>
<keyword id="KW-0812">Transmembrane</keyword>
<keyword id="KW-1133">Transmembrane helix</keyword>
<name>Y392_HAEIN</name>